<evidence type="ECO:0000255" key="1">
    <source>
        <dbReference type="HAMAP-Rule" id="MF_00945"/>
    </source>
</evidence>
<sequence>MSNIYNIEILQIIDSVAREKGISKEILISTVEQAVQVAGRKKYGNEYNIKAQINRKTGEINLLRILKIVEDVEDYLTQISLEDALVKNPEAKIGDEIYEYLPPIDHARVSAQAAKQVITQRVIEAEREKQYHDFKDRKGDIINGIVKRIEYGDIIVDLSRAEAIIKKDQLIKGEHFKPNDRIKAYVQDVRQETKGPQIFLSRVDNQMLVKLFKLEVPEILEDIIQIKSVARDPGSKAKIAVFASDSSIDPVGSCVGIRGNRVKAVTNELNGEKIDIVLWSNDLAQFIVNSLIPLAPSEITKILIDEDSHKVEVVVSQEHQSIAIGRRGQNVRLASKLTGWNIDIMTEEQESKRRNEEFSTSTELFMEALDVEEVIGQLLSVTGFNSVEQIASSEISTLTRIEGFEEELAVEIKNRAIHYVDLKNEKIIKKLEELGVEQELIDILELPLELILKFAEYGIKTIEDLGEMSVNEFKNLAPNSNITDENIKLLIKTARHHGELKDS</sequence>
<keyword id="KW-0963">Cytoplasm</keyword>
<keyword id="KW-1185">Reference proteome</keyword>
<keyword id="KW-0694">RNA-binding</keyword>
<keyword id="KW-0804">Transcription</keyword>
<keyword id="KW-0889">Transcription antitermination</keyword>
<keyword id="KW-0805">Transcription regulation</keyword>
<keyword id="KW-0806">Transcription termination</keyword>
<gene>
    <name evidence="1" type="primary">nusA</name>
    <name type="ordered locus">RP553</name>
</gene>
<organism>
    <name type="scientific">Rickettsia prowazekii (strain Madrid E)</name>
    <dbReference type="NCBI Taxonomy" id="272947"/>
    <lineage>
        <taxon>Bacteria</taxon>
        <taxon>Pseudomonadati</taxon>
        <taxon>Pseudomonadota</taxon>
        <taxon>Alphaproteobacteria</taxon>
        <taxon>Rickettsiales</taxon>
        <taxon>Rickettsiaceae</taxon>
        <taxon>Rickettsieae</taxon>
        <taxon>Rickettsia</taxon>
        <taxon>typhus group</taxon>
    </lineage>
</organism>
<feature type="chain" id="PRO_0000181977" description="Transcription termination/antitermination protein NusA">
    <location>
        <begin position="1"/>
        <end position="503"/>
    </location>
</feature>
<feature type="domain" description="S1 motif" evidence="1">
    <location>
        <begin position="139"/>
        <end position="203"/>
    </location>
</feature>
<feature type="domain" description="KH" evidence="1">
    <location>
        <begin position="308"/>
        <end position="378"/>
    </location>
</feature>
<proteinExistence type="inferred from homology"/>
<name>NUSA_RICPR</name>
<protein>
    <recommendedName>
        <fullName evidence="1">Transcription termination/antitermination protein NusA</fullName>
    </recommendedName>
</protein>
<dbReference type="EMBL" id="AJ235272">
    <property type="protein sequence ID" value="CAA15002.1"/>
    <property type="molecule type" value="Genomic_DNA"/>
</dbReference>
<dbReference type="PIR" id="H71659">
    <property type="entry name" value="H71659"/>
</dbReference>
<dbReference type="RefSeq" id="NP_220925.1">
    <property type="nucleotide sequence ID" value="NC_000963.1"/>
</dbReference>
<dbReference type="RefSeq" id="WP_004597846.1">
    <property type="nucleotide sequence ID" value="NC_000963.1"/>
</dbReference>
<dbReference type="SMR" id="Q9ZCZ7"/>
<dbReference type="STRING" id="272947.gene:17555633"/>
<dbReference type="EnsemblBacteria" id="CAA15002">
    <property type="protein sequence ID" value="CAA15002"/>
    <property type="gene ID" value="CAA15002"/>
</dbReference>
<dbReference type="GeneID" id="57569676"/>
<dbReference type="KEGG" id="rpr:RP553"/>
<dbReference type="PATRIC" id="fig|272947.5.peg.566"/>
<dbReference type="eggNOG" id="COG0195">
    <property type="taxonomic scope" value="Bacteria"/>
</dbReference>
<dbReference type="eggNOG" id="COG0272">
    <property type="taxonomic scope" value="Bacteria"/>
</dbReference>
<dbReference type="HOGENOM" id="CLU_029242_0_0_5"/>
<dbReference type="OrthoDB" id="9807233at2"/>
<dbReference type="Proteomes" id="UP000002480">
    <property type="component" value="Chromosome"/>
</dbReference>
<dbReference type="GO" id="GO:0005829">
    <property type="term" value="C:cytosol"/>
    <property type="evidence" value="ECO:0007669"/>
    <property type="project" value="TreeGrafter"/>
</dbReference>
<dbReference type="GO" id="GO:0003700">
    <property type="term" value="F:DNA-binding transcription factor activity"/>
    <property type="evidence" value="ECO:0007669"/>
    <property type="project" value="InterPro"/>
</dbReference>
<dbReference type="GO" id="GO:0000166">
    <property type="term" value="F:nucleotide binding"/>
    <property type="evidence" value="ECO:0007669"/>
    <property type="project" value="InterPro"/>
</dbReference>
<dbReference type="GO" id="GO:0003723">
    <property type="term" value="F:RNA binding"/>
    <property type="evidence" value="ECO:0007669"/>
    <property type="project" value="UniProtKB-UniRule"/>
</dbReference>
<dbReference type="GO" id="GO:0006353">
    <property type="term" value="P:DNA-templated transcription termination"/>
    <property type="evidence" value="ECO:0007669"/>
    <property type="project" value="UniProtKB-UniRule"/>
</dbReference>
<dbReference type="GO" id="GO:0031564">
    <property type="term" value="P:transcription antitermination"/>
    <property type="evidence" value="ECO:0007669"/>
    <property type="project" value="UniProtKB-UniRule"/>
</dbReference>
<dbReference type="CDD" id="cd02134">
    <property type="entry name" value="KH-II_NusA_rpt1"/>
    <property type="match status" value="1"/>
</dbReference>
<dbReference type="CDD" id="cd22529">
    <property type="entry name" value="KH-II_NusA_rpt2"/>
    <property type="match status" value="1"/>
</dbReference>
<dbReference type="CDD" id="cd04455">
    <property type="entry name" value="S1_NusA"/>
    <property type="match status" value="1"/>
</dbReference>
<dbReference type="FunFam" id="2.40.50.140:FF:000058">
    <property type="entry name" value="Transcription termination/antitermination protein NusA"/>
    <property type="match status" value="1"/>
</dbReference>
<dbReference type="FunFam" id="3.30.300.20:FF:000002">
    <property type="entry name" value="Transcription termination/antitermination protein NusA"/>
    <property type="match status" value="1"/>
</dbReference>
<dbReference type="FunFam" id="3.30.300.20:FF:000005">
    <property type="entry name" value="Transcription termination/antitermination protein NusA"/>
    <property type="match status" value="1"/>
</dbReference>
<dbReference type="Gene3D" id="3.30.300.20">
    <property type="match status" value="2"/>
</dbReference>
<dbReference type="Gene3D" id="1.10.150.20">
    <property type="entry name" value="5' to 3' exonuclease, C-terminal subdomain"/>
    <property type="match status" value="2"/>
</dbReference>
<dbReference type="Gene3D" id="2.40.50.140">
    <property type="entry name" value="Nucleic acid-binding proteins"/>
    <property type="match status" value="1"/>
</dbReference>
<dbReference type="Gene3D" id="3.30.1480.10">
    <property type="entry name" value="NusA, N-terminal domain"/>
    <property type="match status" value="1"/>
</dbReference>
<dbReference type="HAMAP" id="MF_00945_B">
    <property type="entry name" value="NusA_B"/>
    <property type="match status" value="1"/>
</dbReference>
<dbReference type="InterPro" id="IPR010995">
    <property type="entry name" value="DNA_repair_Rad51/TF_NusA_a-hlx"/>
</dbReference>
<dbReference type="InterPro" id="IPR004087">
    <property type="entry name" value="KH_dom"/>
</dbReference>
<dbReference type="InterPro" id="IPR015946">
    <property type="entry name" value="KH_dom-like_a/b"/>
</dbReference>
<dbReference type="InterPro" id="IPR025249">
    <property type="entry name" value="KH_dom_NusA-like"/>
</dbReference>
<dbReference type="InterPro" id="IPR009019">
    <property type="entry name" value="KH_sf_prok-type"/>
</dbReference>
<dbReference type="InterPro" id="IPR012340">
    <property type="entry name" value="NA-bd_OB-fold"/>
</dbReference>
<dbReference type="InterPro" id="IPR030842">
    <property type="entry name" value="NusA_bac"/>
</dbReference>
<dbReference type="InterPro" id="IPR036555">
    <property type="entry name" value="NusA_N_sf"/>
</dbReference>
<dbReference type="InterPro" id="IPR003029">
    <property type="entry name" value="S1_domain"/>
</dbReference>
<dbReference type="InterPro" id="IPR013735">
    <property type="entry name" value="TF_NusA_N"/>
</dbReference>
<dbReference type="InterPro" id="IPR010214">
    <property type="entry name" value="Tscrpt_termin_fac_NusA_C_rpt"/>
</dbReference>
<dbReference type="InterPro" id="IPR010213">
    <property type="entry name" value="Tscrpt_termination_fac_NusA"/>
</dbReference>
<dbReference type="NCBIfam" id="TIGR01953">
    <property type="entry name" value="NusA"/>
    <property type="match status" value="1"/>
</dbReference>
<dbReference type="NCBIfam" id="TIGR01954">
    <property type="entry name" value="nusA_Cterm_rpt"/>
    <property type="match status" value="1"/>
</dbReference>
<dbReference type="PANTHER" id="PTHR22648">
    <property type="entry name" value="TRANSCRIPTION TERMINATION FACTOR NUSA"/>
    <property type="match status" value="1"/>
</dbReference>
<dbReference type="PANTHER" id="PTHR22648:SF0">
    <property type="entry name" value="TRANSCRIPTION TERMINATION_ANTITERMINATION PROTEIN NUSA"/>
    <property type="match status" value="1"/>
</dbReference>
<dbReference type="Pfam" id="PF14520">
    <property type="entry name" value="HHH_5"/>
    <property type="match status" value="1"/>
</dbReference>
<dbReference type="Pfam" id="PF13184">
    <property type="entry name" value="KH_5"/>
    <property type="match status" value="1"/>
</dbReference>
<dbReference type="Pfam" id="PF08529">
    <property type="entry name" value="NusA_N"/>
    <property type="match status" value="1"/>
</dbReference>
<dbReference type="Pfam" id="PF00575">
    <property type="entry name" value="S1"/>
    <property type="match status" value="1"/>
</dbReference>
<dbReference type="SMART" id="SM00322">
    <property type="entry name" value="KH"/>
    <property type="match status" value="1"/>
</dbReference>
<dbReference type="SMART" id="SM00316">
    <property type="entry name" value="S1"/>
    <property type="match status" value="1"/>
</dbReference>
<dbReference type="SUPFAM" id="SSF50249">
    <property type="entry name" value="Nucleic acid-binding proteins"/>
    <property type="match status" value="1"/>
</dbReference>
<dbReference type="SUPFAM" id="SSF54814">
    <property type="entry name" value="Prokaryotic type KH domain (KH-domain type II)"/>
    <property type="match status" value="2"/>
</dbReference>
<dbReference type="SUPFAM" id="SSF47794">
    <property type="entry name" value="Rad51 N-terminal domain-like"/>
    <property type="match status" value="2"/>
</dbReference>
<dbReference type="SUPFAM" id="SSF69705">
    <property type="entry name" value="Transcription factor NusA, N-terminal domain"/>
    <property type="match status" value="1"/>
</dbReference>
<dbReference type="PROSITE" id="PS50084">
    <property type="entry name" value="KH_TYPE_1"/>
    <property type="match status" value="1"/>
</dbReference>
<dbReference type="PROSITE" id="PS50126">
    <property type="entry name" value="S1"/>
    <property type="match status" value="1"/>
</dbReference>
<accession>Q9ZCZ7</accession>
<comment type="function">
    <text evidence="1">Participates in both transcription termination and antitermination.</text>
</comment>
<comment type="subunit">
    <text evidence="1">Monomer. Binds directly to the core enzyme of the DNA-dependent RNA polymerase and to nascent RNA.</text>
</comment>
<comment type="subcellular location">
    <subcellularLocation>
        <location evidence="1">Cytoplasm</location>
    </subcellularLocation>
</comment>
<comment type="similarity">
    <text evidence="1">Belongs to the NusA family.</text>
</comment>
<reference key="1">
    <citation type="journal article" date="1998" name="Nature">
        <title>The genome sequence of Rickettsia prowazekii and the origin of mitochondria.</title>
        <authorList>
            <person name="Andersson S.G.E."/>
            <person name="Zomorodipour A."/>
            <person name="Andersson J.O."/>
            <person name="Sicheritz-Ponten T."/>
            <person name="Alsmark U.C.M."/>
            <person name="Podowski R.M."/>
            <person name="Naeslund A.K."/>
            <person name="Eriksson A.-S."/>
            <person name="Winkler H.H."/>
            <person name="Kurland C.G."/>
        </authorList>
    </citation>
    <scope>NUCLEOTIDE SEQUENCE [LARGE SCALE GENOMIC DNA]</scope>
    <source>
        <strain>Madrid E</strain>
    </source>
</reference>